<gene>
    <name evidence="1" type="primary">glyQ</name>
    <name type="ordered locus">PSPTO_0184</name>
</gene>
<evidence type="ECO:0000255" key="1">
    <source>
        <dbReference type="HAMAP-Rule" id="MF_00254"/>
    </source>
</evidence>
<keyword id="KW-0030">Aminoacyl-tRNA synthetase</keyword>
<keyword id="KW-0067">ATP-binding</keyword>
<keyword id="KW-0963">Cytoplasm</keyword>
<keyword id="KW-0436">Ligase</keyword>
<keyword id="KW-0547">Nucleotide-binding</keyword>
<keyword id="KW-0648">Protein biosynthesis</keyword>
<keyword id="KW-1185">Reference proteome</keyword>
<feature type="chain" id="PRO_0000072856" description="Glycine--tRNA ligase alpha subunit">
    <location>
        <begin position="1"/>
        <end position="315"/>
    </location>
</feature>
<organism>
    <name type="scientific">Pseudomonas syringae pv. tomato (strain ATCC BAA-871 / DC3000)</name>
    <dbReference type="NCBI Taxonomy" id="223283"/>
    <lineage>
        <taxon>Bacteria</taxon>
        <taxon>Pseudomonadati</taxon>
        <taxon>Pseudomonadota</taxon>
        <taxon>Gammaproteobacteria</taxon>
        <taxon>Pseudomonadales</taxon>
        <taxon>Pseudomonadaceae</taxon>
        <taxon>Pseudomonas</taxon>
    </lineage>
</organism>
<reference key="1">
    <citation type="journal article" date="2003" name="Proc. Natl. Acad. Sci. U.S.A.">
        <title>The complete genome sequence of the Arabidopsis and tomato pathogen Pseudomonas syringae pv. tomato DC3000.</title>
        <authorList>
            <person name="Buell C.R."/>
            <person name="Joardar V."/>
            <person name="Lindeberg M."/>
            <person name="Selengut J."/>
            <person name="Paulsen I.T."/>
            <person name="Gwinn M.L."/>
            <person name="Dodson R.J."/>
            <person name="DeBoy R.T."/>
            <person name="Durkin A.S."/>
            <person name="Kolonay J.F."/>
            <person name="Madupu R."/>
            <person name="Daugherty S.C."/>
            <person name="Brinkac L.M."/>
            <person name="Beanan M.J."/>
            <person name="Haft D.H."/>
            <person name="Nelson W.C."/>
            <person name="Davidsen T.M."/>
            <person name="Zafar N."/>
            <person name="Zhou L."/>
            <person name="Liu J."/>
            <person name="Yuan Q."/>
            <person name="Khouri H.M."/>
            <person name="Fedorova N.B."/>
            <person name="Tran B."/>
            <person name="Russell D."/>
            <person name="Berry K.J."/>
            <person name="Utterback T.R."/>
            <person name="Van Aken S.E."/>
            <person name="Feldblyum T.V."/>
            <person name="D'Ascenzo M."/>
            <person name="Deng W.-L."/>
            <person name="Ramos A.R."/>
            <person name="Alfano J.R."/>
            <person name="Cartinhour S."/>
            <person name="Chatterjee A.K."/>
            <person name="Delaney T.P."/>
            <person name="Lazarowitz S.G."/>
            <person name="Martin G.B."/>
            <person name="Schneider D.J."/>
            <person name="Tang X."/>
            <person name="Bender C.L."/>
            <person name="White O."/>
            <person name="Fraser C.M."/>
            <person name="Collmer A."/>
        </authorList>
    </citation>
    <scope>NUCLEOTIDE SEQUENCE [LARGE SCALE GENOMIC DNA]</scope>
    <source>
        <strain>ATCC BAA-871 / DC3000</strain>
    </source>
</reference>
<accession>Q88B36</accession>
<proteinExistence type="inferred from homology"/>
<protein>
    <recommendedName>
        <fullName evidence="1">Glycine--tRNA ligase alpha subunit</fullName>
        <ecNumber evidence="1">6.1.1.14</ecNumber>
    </recommendedName>
    <alternativeName>
        <fullName evidence="1">Glycyl-tRNA synthetase alpha subunit</fullName>
        <shortName evidence="1">GlyRS</shortName>
    </alternativeName>
</protein>
<name>SYGA_PSESM</name>
<sequence>MSQPTPAVRTFQDLILALQQYWAEQGCVVLQPYDMEVGAGTFHTATFLRAVGPETWNAAYVQPSRRPTDGRYGENPNRLQHYYQFQVILKPNPDNFQELYLGSLKHIGLDPLVHDVRFVEDNWESPTLGAWGLGWEIWLNGMEVSQFTYFQQVGGIECYPVTGEITYGLERLAMYQQGVDSVYDLVWADGPFGKVTYGDVFHQNEVEQSTYNFEHANVDKLFELFDFYESEAARLIELELPLPGYEMVLKASHTFNLLDARRAISVTARQQYILRVRTLARSVAQAYLQARARLGFPMAPPDLRDEVLAKLEAAQ</sequence>
<comment type="catalytic activity">
    <reaction evidence="1">
        <text>tRNA(Gly) + glycine + ATP = glycyl-tRNA(Gly) + AMP + diphosphate</text>
        <dbReference type="Rhea" id="RHEA:16013"/>
        <dbReference type="Rhea" id="RHEA-COMP:9664"/>
        <dbReference type="Rhea" id="RHEA-COMP:9683"/>
        <dbReference type="ChEBI" id="CHEBI:30616"/>
        <dbReference type="ChEBI" id="CHEBI:33019"/>
        <dbReference type="ChEBI" id="CHEBI:57305"/>
        <dbReference type="ChEBI" id="CHEBI:78442"/>
        <dbReference type="ChEBI" id="CHEBI:78522"/>
        <dbReference type="ChEBI" id="CHEBI:456215"/>
        <dbReference type="EC" id="6.1.1.14"/>
    </reaction>
</comment>
<comment type="subunit">
    <text evidence="1">Tetramer of two alpha and two beta subunits.</text>
</comment>
<comment type="subcellular location">
    <subcellularLocation>
        <location evidence="1">Cytoplasm</location>
    </subcellularLocation>
</comment>
<comment type="similarity">
    <text evidence="1">Belongs to the class-II aminoacyl-tRNA synthetase family.</text>
</comment>
<dbReference type="EC" id="6.1.1.14" evidence="1"/>
<dbReference type="EMBL" id="AE016853">
    <property type="protein sequence ID" value="AAO53738.1"/>
    <property type="molecule type" value="Genomic_DNA"/>
</dbReference>
<dbReference type="RefSeq" id="NP_790043.1">
    <property type="nucleotide sequence ID" value="NC_004578.1"/>
</dbReference>
<dbReference type="RefSeq" id="WP_003379468.1">
    <property type="nucleotide sequence ID" value="NC_004578.1"/>
</dbReference>
<dbReference type="SMR" id="Q88B36"/>
<dbReference type="STRING" id="223283.PSPTO_0184"/>
<dbReference type="GeneID" id="73738286"/>
<dbReference type="KEGG" id="pst:PSPTO_0184"/>
<dbReference type="PATRIC" id="fig|223283.9.peg.190"/>
<dbReference type="eggNOG" id="COG0752">
    <property type="taxonomic scope" value="Bacteria"/>
</dbReference>
<dbReference type="HOGENOM" id="CLU_057066_1_0_6"/>
<dbReference type="OrthoDB" id="9802183at2"/>
<dbReference type="PhylomeDB" id="Q88B36"/>
<dbReference type="Proteomes" id="UP000002515">
    <property type="component" value="Chromosome"/>
</dbReference>
<dbReference type="GO" id="GO:0005829">
    <property type="term" value="C:cytosol"/>
    <property type="evidence" value="ECO:0007669"/>
    <property type="project" value="TreeGrafter"/>
</dbReference>
<dbReference type="GO" id="GO:0005524">
    <property type="term" value="F:ATP binding"/>
    <property type="evidence" value="ECO:0007669"/>
    <property type="project" value="UniProtKB-UniRule"/>
</dbReference>
<dbReference type="GO" id="GO:0004820">
    <property type="term" value="F:glycine-tRNA ligase activity"/>
    <property type="evidence" value="ECO:0007669"/>
    <property type="project" value="UniProtKB-UniRule"/>
</dbReference>
<dbReference type="GO" id="GO:0006426">
    <property type="term" value="P:glycyl-tRNA aminoacylation"/>
    <property type="evidence" value="ECO:0007669"/>
    <property type="project" value="UniProtKB-UniRule"/>
</dbReference>
<dbReference type="CDD" id="cd00733">
    <property type="entry name" value="GlyRS_alpha_core"/>
    <property type="match status" value="1"/>
</dbReference>
<dbReference type="FunFam" id="3.30.930.10:FF:000006">
    <property type="entry name" value="Glycine--tRNA ligase alpha subunit"/>
    <property type="match status" value="1"/>
</dbReference>
<dbReference type="Gene3D" id="3.30.930.10">
    <property type="entry name" value="Bira Bifunctional Protein, Domain 2"/>
    <property type="match status" value="1"/>
</dbReference>
<dbReference type="Gene3D" id="1.20.58.180">
    <property type="entry name" value="Class II aaRS and biotin synthetases, domain 2"/>
    <property type="match status" value="1"/>
</dbReference>
<dbReference type="HAMAP" id="MF_00254">
    <property type="entry name" value="Gly_tRNA_synth_alpha"/>
    <property type="match status" value="1"/>
</dbReference>
<dbReference type="InterPro" id="IPR045864">
    <property type="entry name" value="aa-tRNA-synth_II/BPL/LPL"/>
</dbReference>
<dbReference type="InterPro" id="IPR006194">
    <property type="entry name" value="Gly-tRNA-synth_heterodimer"/>
</dbReference>
<dbReference type="InterPro" id="IPR002310">
    <property type="entry name" value="Gly-tRNA_ligase_asu"/>
</dbReference>
<dbReference type="NCBIfam" id="TIGR00388">
    <property type="entry name" value="glyQ"/>
    <property type="match status" value="1"/>
</dbReference>
<dbReference type="NCBIfam" id="NF006827">
    <property type="entry name" value="PRK09348.1"/>
    <property type="match status" value="1"/>
</dbReference>
<dbReference type="PANTHER" id="PTHR30075:SF2">
    <property type="entry name" value="GLYCINE--TRNA LIGASE, CHLOROPLASTIC_MITOCHONDRIAL 2"/>
    <property type="match status" value="1"/>
</dbReference>
<dbReference type="PANTHER" id="PTHR30075">
    <property type="entry name" value="GLYCYL-TRNA SYNTHETASE"/>
    <property type="match status" value="1"/>
</dbReference>
<dbReference type="Pfam" id="PF02091">
    <property type="entry name" value="tRNA-synt_2e"/>
    <property type="match status" value="1"/>
</dbReference>
<dbReference type="PRINTS" id="PR01044">
    <property type="entry name" value="TRNASYNTHGA"/>
</dbReference>
<dbReference type="SUPFAM" id="SSF55681">
    <property type="entry name" value="Class II aaRS and biotin synthetases"/>
    <property type="match status" value="1"/>
</dbReference>
<dbReference type="PROSITE" id="PS50861">
    <property type="entry name" value="AA_TRNA_LIGASE_II_GLYAB"/>
    <property type="match status" value="1"/>
</dbReference>